<protein>
    <recommendedName>
        <fullName evidence="1">Peptide deformylase</fullName>
        <shortName evidence="1">PDF</shortName>
        <ecNumber evidence="1">3.5.1.88</ecNumber>
    </recommendedName>
    <alternativeName>
        <fullName evidence="1">Polypeptide deformylase</fullName>
    </alternativeName>
</protein>
<proteinExistence type="inferred from homology"/>
<evidence type="ECO:0000255" key="1">
    <source>
        <dbReference type="HAMAP-Rule" id="MF_00163"/>
    </source>
</evidence>
<dbReference type="EC" id="3.5.1.88" evidence="1"/>
<dbReference type="EMBL" id="AP006627">
    <property type="protein sequence ID" value="BAD64958.1"/>
    <property type="molecule type" value="Genomic_DNA"/>
</dbReference>
<dbReference type="RefSeq" id="WP_011247266.1">
    <property type="nucleotide sequence ID" value="NC_006582.1"/>
</dbReference>
<dbReference type="SMR" id="Q5WFA2"/>
<dbReference type="STRING" id="66692.ABC2423"/>
<dbReference type="KEGG" id="bcl:ABC2423"/>
<dbReference type="eggNOG" id="COG0242">
    <property type="taxonomic scope" value="Bacteria"/>
</dbReference>
<dbReference type="HOGENOM" id="CLU_061901_4_0_9"/>
<dbReference type="OrthoDB" id="9784988at2"/>
<dbReference type="Proteomes" id="UP000001168">
    <property type="component" value="Chromosome"/>
</dbReference>
<dbReference type="GO" id="GO:0046872">
    <property type="term" value="F:metal ion binding"/>
    <property type="evidence" value="ECO:0007669"/>
    <property type="project" value="UniProtKB-KW"/>
</dbReference>
<dbReference type="GO" id="GO:0042586">
    <property type="term" value="F:peptide deformylase activity"/>
    <property type="evidence" value="ECO:0007669"/>
    <property type="project" value="UniProtKB-UniRule"/>
</dbReference>
<dbReference type="GO" id="GO:0043686">
    <property type="term" value="P:co-translational protein modification"/>
    <property type="evidence" value="ECO:0007669"/>
    <property type="project" value="TreeGrafter"/>
</dbReference>
<dbReference type="GO" id="GO:0006412">
    <property type="term" value="P:translation"/>
    <property type="evidence" value="ECO:0007669"/>
    <property type="project" value="UniProtKB-UniRule"/>
</dbReference>
<dbReference type="CDD" id="cd00487">
    <property type="entry name" value="Pep_deformylase"/>
    <property type="match status" value="1"/>
</dbReference>
<dbReference type="FunFam" id="3.90.45.10:FF:000002">
    <property type="entry name" value="Peptide deformylase"/>
    <property type="match status" value="1"/>
</dbReference>
<dbReference type="Gene3D" id="3.90.45.10">
    <property type="entry name" value="Peptide deformylase"/>
    <property type="match status" value="1"/>
</dbReference>
<dbReference type="HAMAP" id="MF_00163">
    <property type="entry name" value="Pep_deformylase"/>
    <property type="match status" value="1"/>
</dbReference>
<dbReference type="InterPro" id="IPR023635">
    <property type="entry name" value="Peptide_deformylase"/>
</dbReference>
<dbReference type="InterPro" id="IPR036821">
    <property type="entry name" value="Peptide_deformylase_sf"/>
</dbReference>
<dbReference type="NCBIfam" id="TIGR00079">
    <property type="entry name" value="pept_deformyl"/>
    <property type="match status" value="1"/>
</dbReference>
<dbReference type="PANTHER" id="PTHR10458">
    <property type="entry name" value="PEPTIDE DEFORMYLASE"/>
    <property type="match status" value="1"/>
</dbReference>
<dbReference type="PANTHER" id="PTHR10458:SF8">
    <property type="entry name" value="PEPTIDE DEFORMYLASE 2"/>
    <property type="match status" value="1"/>
</dbReference>
<dbReference type="Pfam" id="PF01327">
    <property type="entry name" value="Pep_deformylase"/>
    <property type="match status" value="1"/>
</dbReference>
<dbReference type="PIRSF" id="PIRSF004749">
    <property type="entry name" value="Pep_def"/>
    <property type="match status" value="1"/>
</dbReference>
<dbReference type="PRINTS" id="PR01576">
    <property type="entry name" value="PDEFORMYLASE"/>
</dbReference>
<dbReference type="SUPFAM" id="SSF56420">
    <property type="entry name" value="Peptide deformylase"/>
    <property type="match status" value="1"/>
</dbReference>
<reference key="1">
    <citation type="submission" date="2003-10" db="EMBL/GenBank/DDBJ databases">
        <title>The complete genome sequence of the alkaliphilic Bacillus clausii KSM-K16.</title>
        <authorList>
            <person name="Takaki Y."/>
            <person name="Kageyama Y."/>
            <person name="Shimamura S."/>
            <person name="Suzuki H."/>
            <person name="Nishi S."/>
            <person name="Hatada Y."/>
            <person name="Kawai S."/>
            <person name="Ito S."/>
            <person name="Horikoshi K."/>
        </authorList>
    </citation>
    <scope>NUCLEOTIDE SEQUENCE [LARGE SCALE GENOMIC DNA]</scope>
    <source>
        <strain>KSM-K16</strain>
    </source>
</reference>
<organism>
    <name type="scientific">Shouchella clausii (strain KSM-K16)</name>
    <name type="common">Alkalihalobacillus clausii</name>
    <dbReference type="NCBI Taxonomy" id="66692"/>
    <lineage>
        <taxon>Bacteria</taxon>
        <taxon>Bacillati</taxon>
        <taxon>Bacillota</taxon>
        <taxon>Bacilli</taxon>
        <taxon>Bacillales</taxon>
        <taxon>Bacillaceae</taxon>
        <taxon>Shouchella</taxon>
    </lineage>
</organism>
<feature type="chain" id="PRO_0000301002" description="Peptide deformylase">
    <location>
        <begin position="1"/>
        <end position="183"/>
    </location>
</feature>
<feature type="active site" evidence="1">
    <location>
        <position position="154"/>
    </location>
</feature>
<feature type="binding site" evidence="1">
    <location>
        <position position="110"/>
    </location>
    <ligand>
        <name>Fe cation</name>
        <dbReference type="ChEBI" id="CHEBI:24875"/>
    </ligand>
</feature>
<feature type="binding site" evidence="1">
    <location>
        <position position="153"/>
    </location>
    <ligand>
        <name>Fe cation</name>
        <dbReference type="ChEBI" id="CHEBI:24875"/>
    </ligand>
</feature>
<feature type="binding site" evidence="1">
    <location>
        <position position="157"/>
    </location>
    <ligand>
        <name>Fe cation</name>
        <dbReference type="ChEBI" id="CHEBI:24875"/>
    </ligand>
</feature>
<gene>
    <name evidence="1" type="primary">def</name>
    <name type="ordered locus">ABC2423</name>
</gene>
<accession>Q5WFA2</accession>
<name>DEF_SHOC1</name>
<comment type="function">
    <text evidence="1">Removes the formyl group from the N-terminal Met of newly synthesized proteins. Requires at least a dipeptide for an efficient rate of reaction. N-terminal L-methionine is a prerequisite for activity but the enzyme has broad specificity at other positions.</text>
</comment>
<comment type="catalytic activity">
    <reaction evidence="1">
        <text>N-terminal N-formyl-L-methionyl-[peptide] + H2O = N-terminal L-methionyl-[peptide] + formate</text>
        <dbReference type="Rhea" id="RHEA:24420"/>
        <dbReference type="Rhea" id="RHEA-COMP:10639"/>
        <dbReference type="Rhea" id="RHEA-COMP:10640"/>
        <dbReference type="ChEBI" id="CHEBI:15377"/>
        <dbReference type="ChEBI" id="CHEBI:15740"/>
        <dbReference type="ChEBI" id="CHEBI:49298"/>
        <dbReference type="ChEBI" id="CHEBI:64731"/>
        <dbReference type="EC" id="3.5.1.88"/>
    </reaction>
</comment>
<comment type="cofactor">
    <cofactor evidence="1">
        <name>Fe(2+)</name>
        <dbReference type="ChEBI" id="CHEBI:29033"/>
    </cofactor>
    <text evidence="1">Binds 1 Fe(2+) ion.</text>
</comment>
<comment type="similarity">
    <text evidence="1">Belongs to the polypeptide deformylase family.</text>
</comment>
<keyword id="KW-0378">Hydrolase</keyword>
<keyword id="KW-0408">Iron</keyword>
<keyword id="KW-0479">Metal-binding</keyword>
<keyword id="KW-0648">Protein biosynthesis</keyword>
<keyword id="KW-1185">Reference proteome</keyword>
<sequence length="183" mass="20388">MITMDDIVREGNPILRKVAEPVELPLTDEDKQTLVDMLEFIKNSQDPEIAEKYGLRPGVGLAAPQIGISKRLFAIHATDENGNLYSMGIANPKVVSHSVETNELENGEGCLSVDRDVPGLVPRRARLTITGVDHEGNDVRMRLRGYIAIVFQHELDHLDGIMFYDRIEGLEDPFKKPLPGFAL</sequence>